<sequence>MIKIGIYGAKGRMGKQIEECLKSETQAEISILYNKGGNLEELFEKSDVIIDFSSPSGTHELLNYARTMPKPLTIGTTGLDEKILHLMQSASKVMPIFYATNMSLGVAVLNYLASKASQMLRNFDIEILEMHHRHKKDAPSGTAMTLAQSVAKARNLELEKVRVSGRDGIIGERSKDEIAVMSLRGGDIVGRHTVGFYEDGEFLELNHTATSRATFAKGAIKIAIWLSKQEAKMYSINDFFRNLKCVQL</sequence>
<gene>
    <name evidence="1" type="primary">dapB</name>
    <name type="ordered locus">JJD26997_0207</name>
</gene>
<keyword id="KW-0028">Amino-acid biosynthesis</keyword>
<keyword id="KW-0963">Cytoplasm</keyword>
<keyword id="KW-0220">Diaminopimelate biosynthesis</keyword>
<keyword id="KW-0457">Lysine biosynthesis</keyword>
<keyword id="KW-0520">NAD</keyword>
<keyword id="KW-0521">NADP</keyword>
<keyword id="KW-0560">Oxidoreductase</keyword>
<comment type="function">
    <text evidence="1">Catalyzes the conversion of 4-hydroxy-tetrahydrodipicolinate (HTPA) to tetrahydrodipicolinate.</text>
</comment>
<comment type="catalytic activity">
    <reaction evidence="1">
        <text>(S)-2,3,4,5-tetrahydrodipicolinate + NAD(+) + H2O = (2S,4S)-4-hydroxy-2,3,4,5-tetrahydrodipicolinate + NADH + H(+)</text>
        <dbReference type="Rhea" id="RHEA:35323"/>
        <dbReference type="ChEBI" id="CHEBI:15377"/>
        <dbReference type="ChEBI" id="CHEBI:15378"/>
        <dbReference type="ChEBI" id="CHEBI:16845"/>
        <dbReference type="ChEBI" id="CHEBI:57540"/>
        <dbReference type="ChEBI" id="CHEBI:57945"/>
        <dbReference type="ChEBI" id="CHEBI:67139"/>
        <dbReference type="EC" id="1.17.1.8"/>
    </reaction>
</comment>
<comment type="catalytic activity">
    <reaction evidence="1">
        <text>(S)-2,3,4,5-tetrahydrodipicolinate + NADP(+) + H2O = (2S,4S)-4-hydroxy-2,3,4,5-tetrahydrodipicolinate + NADPH + H(+)</text>
        <dbReference type="Rhea" id="RHEA:35331"/>
        <dbReference type="ChEBI" id="CHEBI:15377"/>
        <dbReference type="ChEBI" id="CHEBI:15378"/>
        <dbReference type="ChEBI" id="CHEBI:16845"/>
        <dbReference type="ChEBI" id="CHEBI:57783"/>
        <dbReference type="ChEBI" id="CHEBI:58349"/>
        <dbReference type="ChEBI" id="CHEBI:67139"/>
        <dbReference type="EC" id="1.17.1.8"/>
    </reaction>
</comment>
<comment type="pathway">
    <text evidence="1">Amino-acid biosynthesis; L-lysine biosynthesis via DAP pathway; (S)-tetrahydrodipicolinate from L-aspartate: step 4/4.</text>
</comment>
<comment type="subcellular location">
    <subcellularLocation>
        <location evidence="1">Cytoplasm</location>
    </subcellularLocation>
</comment>
<comment type="similarity">
    <text evidence="1">Belongs to the DapB family.</text>
</comment>
<comment type="caution">
    <text evidence="2">Was originally thought to be a dihydrodipicolinate reductase (DHDPR), catalyzing the conversion of dihydrodipicolinate to tetrahydrodipicolinate. However, it was shown in E.coli that the substrate of the enzymatic reaction is not dihydrodipicolinate (DHDP) but in fact (2S,4S)-4-hydroxy-2,3,4,5-tetrahydrodipicolinic acid (HTPA), the product released by the DapA-catalyzed reaction.</text>
</comment>
<protein>
    <recommendedName>
        <fullName evidence="1">4-hydroxy-tetrahydrodipicolinate reductase</fullName>
        <shortName evidence="1">HTPA reductase</shortName>
        <ecNumber evidence="1">1.17.1.8</ecNumber>
    </recommendedName>
</protein>
<proteinExistence type="inferred from homology"/>
<dbReference type="EC" id="1.17.1.8" evidence="1"/>
<dbReference type="EMBL" id="CP000768">
    <property type="protein sequence ID" value="ABS44158.1"/>
    <property type="molecule type" value="Genomic_DNA"/>
</dbReference>
<dbReference type="SMR" id="A7H1R4"/>
<dbReference type="KEGG" id="cjd:JJD26997_0207"/>
<dbReference type="HOGENOM" id="CLU_047479_2_1_7"/>
<dbReference type="UniPathway" id="UPA00034">
    <property type="reaction ID" value="UER00018"/>
</dbReference>
<dbReference type="Proteomes" id="UP000002302">
    <property type="component" value="Chromosome"/>
</dbReference>
<dbReference type="GO" id="GO:0005737">
    <property type="term" value="C:cytoplasm"/>
    <property type="evidence" value="ECO:0007669"/>
    <property type="project" value="UniProtKB-SubCell"/>
</dbReference>
<dbReference type="GO" id="GO:0008839">
    <property type="term" value="F:4-hydroxy-tetrahydrodipicolinate reductase"/>
    <property type="evidence" value="ECO:0007669"/>
    <property type="project" value="UniProtKB-EC"/>
</dbReference>
<dbReference type="GO" id="GO:0051287">
    <property type="term" value="F:NAD binding"/>
    <property type="evidence" value="ECO:0007669"/>
    <property type="project" value="UniProtKB-UniRule"/>
</dbReference>
<dbReference type="GO" id="GO:0050661">
    <property type="term" value="F:NADP binding"/>
    <property type="evidence" value="ECO:0007669"/>
    <property type="project" value="UniProtKB-UniRule"/>
</dbReference>
<dbReference type="GO" id="GO:0016726">
    <property type="term" value="F:oxidoreductase activity, acting on CH or CH2 groups, NAD or NADP as acceptor"/>
    <property type="evidence" value="ECO:0007669"/>
    <property type="project" value="UniProtKB-UniRule"/>
</dbReference>
<dbReference type="GO" id="GO:0019877">
    <property type="term" value="P:diaminopimelate biosynthetic process"/>
    <property type="evidence" value="ECO:0007669"/>
    <property type="project" value="UniProtKB-UniRule"/>
</dbReference>
<dbReference type="GO" id="GO:0009089">
    <property type="term" value="P:lysine biosynthetic process via diaminopimelate"/>
    <property type="evidence" value="ECO:0007669"/>
    <property type="project" value="UniProtKB-UniRule"/>
</dbReference>
<dbReference type="CDD" id="cd02274">
    <property type="entry name" value="DHDPR_N"/>
    <property type="match status" value="1"/>
</dbReference>
<dbReference type="FunFam" id="3.30.360.10:FF:000004">
    <property type="entry name" value="4-hydroxy-tetrahydrodipicolinate reductase"/>
    <property type="match status" value="1"/>
</dbReference>
<dbReference type="Gene3D" id="3.30.360.10">
    <property type="entry name" value="Dihydrodipicolinate Reductase, domain 2"/>
    <property type="match status" value="1"/>
</dbReference>
<dbReference type="Gene3D" id="3.40.50.720">
    <property type="entry name" value="NAD(P)-binding Rossmann-like Domain"/>
    <property type="match status" value="1"/>
</dbReference>
<dbReference type="HAMAP" id="MF_00102">
    <property type="entry name" value="DapB"/>
    <property type="match status" value="1"/>
</dbReference>
<dbReference type="InterPro" id="IPR022663">
    <property type="entry name" value="DapB_C"/>
</dbReference>
<dbReference type="InterPro" id="IPR000846">
    <property type="entry name" value="DapB_N"/>
</dbReference>
<dbReference type="InterPro" id="IPR022664">
    <property type="entry name" value="DapB_N_CS"/>
</dbReference>
<dbReference type="InterPro" id="IPR023940">
    <property type="entry name" value="DHDPR_bac"/>
</dbReference>
<dbReference type="InterPro" id="IPR036291">
    <property type="entry name" value="NAD(P)-bd_dom_sf"/>
</dbReference>
<dbReference type="NCBIfam" id="TIGR00036">
    <property type="entry name" value="dapB"/>
    <property type="match status" value="1"/>
</dbReference>
<dbReference type="PANTHER" id="PTHR20836:SF0">
    <property type="entry name" value="4-HYDROXY-TETRAHYDRODIPICOLINATE REDUCTASE 1, CHLOROPLASTIC-RELATED"/>
    <property type="match status" value="1"/>
</dbReference>
<dbReference type="PANTHER" id="PTHR20836">
    <property type="entry name" value="DIHYDRODIPICOLINATE REDUCTASE"/>
    <property type="match status" value="1"/>
</dbReference>
<dbReference type="Pfam" id="PF05173">
    <property type="entry name" value="DapB_C"/>
    <property type="match status" value="1"/>
</dbReference>
<dbReference type="Pfam" id="PF01113">
    <property type="entry name" value="DapB_N"/>
    <property type="match status" value="1"/>
</dbReference>
<dbReference type="PIRSF" id="PIRSF000161">
    <property type="entry name" value="DHPR"/>
    <property type="match status" value="1"/>
</dbReference>
<dbReference type="SUPFAM" id="SSF55347">
    <property type="entry name" value="Glyceraldehyde-3-phosphate dehydrogenase-like, C-terminal domain"/>
    <property type="match status" value="1"/>
</dbReference>
<dbReference type="SUPFAM" id="SSF51735">
    <property type="entry name" value="NAD(P)-binding Rossmann-fold domains"/>
    <property type="match status" value="1"/>
</dbReference>
<dbReference type="PROSITE" id="PS01298">
    <property type="entry name" value="DAPB"/>
    <property type="match status" value="1"/>
</dbReference>
<evidence type="ECO:0000255" key="1">
    <source>
        <dbReference type="HAMAP-Rule" id="MF_00102"/>
    </source>
</evidence>
<evidence type="ECO:0000305" key="2"/>
<organism>
    <name type="scientific">Campylobacter jejuni subsp. doylei (strain ATCC BAA-1458 / RM4099 / 269.97)</name>
    <dbReference type="NCBI Taxonomy" id="360109"/>
    <lineage>
        <taxon>Bacteria</taxon>
        <taxon>Pseudomonadati</taxon>
        <taxon>Campylobacterota</taxon>
        <taxon>Epsilonproteobacteria</taxon>
        <taxon>Campylobacterales</taxon>
        <taxon>Campylobacteraceae</taxon>
        <taxon>Campylobacter</taxon>
    </lineage>
</organism>
<feature type="chain" id="PRO_1000008553" description="4-hydroxy-tetrahydrodipicolinate reductase">
    <location>
        <begin position="1"/>
        <end position="248"/>
    </location>
</feature>
<feature type="active site" description="Proton donor/acceptor" evidence="1">
    <location>
        <position position="131"/>
    </location>
</feature>
<feature type="active site" description="Proton donor" evidence="1">
    <location>
        <position position="135"/>
    </location>
</feature>
<feature type="binding site" evidence="1">
    <location>
        <begin position="8"/>
        <end position="13"/>
    </location>
    <ligand>
        <name>NAD(+)</name>
        <dbReference type="ChEBI" id="CHEBI:57540"/>
    </ligand>
</feature>
<feature type="binding site" evidence="1">
    <location>
        <begin position="75"/>
        <end position="77"/>
    </location>
    <ligand>
        <name>NAD(+)</name>
        <dbReference type="ChEBI" id="CHEBI:57540"/>
    </ligand>
</feature>
<feature type="binding site" evidence="1">
    <location>
        <begin position="99"/>
        <end position="102"/>
    </location>
    <ligand>
        <name>NAD(+)</name>
        <dbReference type="ChEBI" id="CHEBI:57540"/>
    </ligand>
</feature>
<feature type="binding site" evidence="1">
    <location>
        <position position="132"/>
    </location>
    <ligand>
        <name>(S)-2,3,4,5-tetrahydrodipicolinate</name>
        <dbReference type="ChEBI" id="CHEBI:16845"/>
    </ligand>
</feature>
<feature type="binding site" evidence="1">
    <location>
        <begin position="141"/>
        <end position="142"/>
    </location>
    <ligand>
        <name>(S)-2,3,4,5-tetrahydrodipicolinate</name>
        <dbReference type="ChEBI" id="CHEBI:16845"/>
    </ligand>
</feature>
<reference key="1">
    <citation type="submission" date="2007-07" db="EMBL/GenBank/DDBJ databases">
        <title>Complete genome sequence of Campylobacter jejuni subsp doylei 269.97 isolated from human blood.</title>
        <authorList>
            <person name="Fouts D.E."/>
            <person name="Mongodin E.F."/>
            <person name="Puiu D."/>
            <person name="Sebastian Y."/>
            <person name="Miller W.G."/>
            <person name="Mandrell R.E."/>
            <person name="Lastovica A.J."/>
            <person name="Nelson K.E."/>
        </authorList>
    </citation>
    <scope>NUCLEOTIDE SEQUENCE [LARGE SCALE GENOMIC DNA]</scope>
    <source>
        <strain>ATCC BAA-1458 / RM4099 / 269.97</strain>
    </source>
</reference>
<name>DAPB_CAMJD</name>
<accession>A7H1R4</accession>